<protein>
    <recommendedName>
        <fullName>mRNA 3'-end-processing protein YTH1</fullName>
    </recommendedName>
</protein>
<gene>
    <name type="primary">YTH1</name>
    <name type="ordered locus">CNBB4640</name>
</gene>
<reference key="1">
    <citation type="journal article" date="2005" name="Science">
        <title>The genome of the basidiomycetous yeast and human pathogen Cryptococcus neoformans.</title>
        <authorList>
            <person name="Loftus B.J."/>
            <person name="Fung E."/>
            <person name="Roncaglia P."/>
            <person name="Rowley D."/>
            <person name="Amedeo P."/>
            <person name="Bruno D."/>
            <person name="Vamathevan J."/>
            <person name="Miranda M."/>
            <person name="Anderson I.J."/>
            <person name="Fraser J.A."/>
            <person name="Allen J.E."/>
            <person name="Bosdet I.E."/>
            <person name="Brent M.R."/>
            <person name="Chiu R."/>
            <person name="Doering T.L."/>
            <person name="Donlin M.J."/>
            <person name="D'Souza C.A."/>
            <person name="Fox D.S."/>
            <person name="Grinberg V."/>
            <person name="Fu J."/>
            <person name="Fukushima M."/>
            <person name="Haas B.J."/>
            <person name="Huang J.C."/>
            <person name="Janbon G."/>
            <person name="Jones S.J.M."/>
            <person name="Koo H.L."/>
            <person name="Krzywinski M.I."/>
            <person name="Kwon-Chung K.J."/>
            <person name="Lengeler K.B."/>
            <person name="Maiti R."/>
            <person name="Marra M.A."/>
            <person name="Marra R.E."/>
            <person name="Mathewson C.A."/>
            <person name="Mitchell T.G."/>
            <person name="Pertea M."/>
            <person name="Riggs F.R."/>
            <person name="Salzberg S.L."/>
            <person name="Schein J.E."/>
            <person name="Shvartsbeyn A."/>
            <person name="Shin H."/>
            <person name="Shumway M."/>
            <person name="Specht C.A."/>
            <person name="Suh B.B."/>
            <person name="Tenney A."/>
            <person name="Utterback T.R."/>
            <person name="Wickes B.L."/>
            <person name="Wortman J.R."/>
            <person name="Wye N.H."/>
            <person name="Kronstad J.W."/>
            <person name="Lodge J.K."/>
            <person name="Heitman J."/>
            <person name="Davis R.W."/>
            <person name="Fraser C.M."/>
            <person name="Hyman R.W."/>
        </authorList>
    </citation>
    <scope>NUCLEOTIDE SEQUENCE [LARGE SCALE GENOMIC DNA]</scope>
    <source>
        <strain>B-3501A</strain>
    </source>
</reference>
<organism>
    <name type="scientific">Cryptococcus neoformans var. neoformans serotype D (strain B-3501A)</name>
    <name type="common">Filobasidiella neoformans</name>
    <dbReference type="NCBI Taxonomy" id="283643"/>
    <lineage>
        <taxon>Eukaryota</taxon>
        <taxon>Fungi</taxon>
        <taxon>Dikarya</taxon>
        <taxon>Basidiomycota</taxon>
        <taxon>Agaricomycotina</taxon>
        <taxon>Tremellomycetes</taxon>
        <taxon>Tremellales</taxon>
        <taxon>Cryptococcaceae</taxon>
        <taxon>Cryptococcus</taxon>
        <taxon>Cryptococcus neoformans species complex</taxon>
    </lineage>
</organism>
<comment type="function">
    <text evidence="1">Component of the cleavage factor I (CF I) involved in pre-mRNA 3'-end processing.</text>
</comment>
<comment type="subcellular location">
    <subcellularLocation>
        <location evidence="1">Nucleus</location>
    </subcellularLocation>
</comment>
<comment type="similarity">
    <text evidence="5">Belongs to the CPSF4/YTH1 family.</text>
</comment>
<feature type="chain" id="PRO_0000410345" description="mRNA 3'-end-processing protein YTH1">
    <location>
        <begin position="1"/>
        <end position="332"/>
    </location>
</feature>
<feature type="zinc finger region" description="C3H1-type 1" evidence="3">
    <location>
        <begin position="45"/>
        <end position="74"/>
    </location>
</feature>
<feature type="zinc finger region" description="C3H1-type 2" evidence="3">
    <location>
        <begin position="93"/>
        <end position="120"/>
    </location>
</feature>
<feature type="zinc finger region" description="C3H1-type 3" evidence="3">
    <location>
        <begin position="121"/>
        <end position="147"/>
    </location>
</feature>
<feature type="zinc finger region" description="C3H1-type 4" evidence="3">
    <location>
        <begin position="148"/>
        <end position="175"/>
    </location>
</feature>
<feature type="zinc finger region" description="C3H1-type 3" evidence="3">
    <location>
        <begin position="149"/>
        <end position="174"/>
    </location>
</feature>
<feature type="zinc finger region" description="C3H1-type 5" evidence="3">
    <location>
        <begin position="177"/>
        <end position="199"/>
    </location>
</feature>
<feature type="zinc finger region" description="CCHC-type" evidence="2">
    <location>
        <begin position="301"/>
        <end position="318"/>
    </location>
</feature>
<feature type="region of interest" description="Disordered" evidence="4">
    <location>
        <begin position="269"/>
        <end position="293"/>
    </location>
</feature>
<accession>P0CS65</accession>
<accession>Q55X98</accession>
<accession>Q5KMN5</accession>
<proteinExistence type="inferred from homology"/>
<sequence>MAAASNSAPLDPKLGRAADFVRPDFHQVNLDLENYLKTERNFKLDADQQICPLSITPLGCPLPPSQCPYRHTTPSQLNFKPPPPLPAHPREREKKLTVCKHYLRNLCKMGDNCEYTHDFNLRTMPVCIWFVKQGKCELGGECLYFHPRDRRVECPDYNRGFCVLGPNCPRKHIRRRLCDAYAAGFCPDGKDCKLAHPSPNRPPAESYINPIPPDPEAFNGPPPQLPAGYGRWREYKYDPNAVVVPAAAWVEGGSLSGWRAGGFLSANARRDNQRNRDNDDEGGRGSGGERKGGWQKDLSTVLCFRCNQYGHFANNCPNQYVPGDRGGGRRRE</sequence>
<dbReference type="EMBL" id="AAEY01000010">
    <property type="protein sequence ID" value="EAL22587.1"/>
    <property type="molecule type" value="Genomic_DNA"/>
</dbReference>
<dbReference type="RefSeq" id="XP_777234.1">
    <property type="nucleotide sequence ID" value="XM_772141.1"/>
</dbReference>
<dbReference type="EnsemblFungi" id="AAW41806">
    <property type="protein sequence ID" value="AAW41806"/>
    <property type="gene ID" value="CNB01070"/>
</dbReference>
<dbReference type="GeneID" id="4934558"/>
<dbReference type="KEGG" id="cnb:CNBB4640"/>
<dbReference type="VEuPathDB" id="FungiDB:CNBB4640"/>
<dbReference type="HOGENOM" id="CLU_024513_0_0_1"/>
<dbReference type="OrthoDB" id="4219at5206"/>
<dbReference type="GO" id="GO:0005634">
    <property type="term" value="C:nucleus"/>
    <property type="evidence" value="ECO:0007669"/>
    <property type="project" value="UniProtKB-SubCell"/>
</dbReference>
<dbReference type="GO" id="GO:0003723">
    <property type="term" value="F:RNA binding"/>
    <property type="evidence" value="ECO:0007669"/>
    <property type="project" value="UniProtKB-KW"/>
</dbReference>
<dbReference type="GO" id="GO:0008270">
    <property type="term" value="F:zinc ion binding"/>
    <property type="evidence" value="ECO:0007669"/>
    <property type="project" value="UniProtKB-KW"/>
</dbReference>
<dbReference type="GO" id="GO:0006397">
    <property type="term" value="P:mRNA processing"/>
    <property type="evidence" value="ECO:0007669"/>
    <property type="project" value="UniProtKB-KW"/>
</dbReference>
<dbReference type="FunFam" id="4.10.1000.10:FF:000017">
    <property type="entry name" value="Cleavage and polyadenylation specificity factor 30 kDa subunit"/>
    <property type="match status" value="1"/>
</dbReference>
<dbReference type="Gene3D" id="4.10.1000.10">
    <property type="entry name" value="Zinc finger, CCCH-type"/>
    <property type="match status" value="2"/>
</dbReference>
<dbReference type="Gene3D" id="4.10.60.10">
    <property type="entry name" value="Zinc finger, CCHC-type"/>
    <property type="match status" value="1"/>
</dbReference>
<dbReference type="InterPro" id="IPR045348">
    <property type="entry name" value="CPSF4/Yth1"/>
</dbReference>
<dbReference type="InterPro" id="IPR000571">
    <property type="entry name" value="Znf_CCCH"/>
</dbReference>
<dbReference type="InterPro" id="IPR036855">
    <property type="entry name" value="Znf_CCCH_sf"/>
</dbReference>
<dbReference type="InterPro" id="IPR001878">
    <property type="entry name" value="Znf_CCHC"/>
</dbReference>
<dbReference type="InterPro" id="IPR036875">
    <property type="entry name" value="Znf_CCHC_sf"/>
</dbReference>
<dbReference type="PANTHER" id="PTHR23102:SF24">
    <property type="entry name" value="CLEAVAGE AND POLYADENYLATION SPECIFICITY FACTOR SUBUNIT 4"/>
    <property type="match status" value="1"/>
</dbReference>
<dbReference type="PANTHER" id="PTHR23102">
    <property type="entry name" value="CLEAVAGE AND POLYADENYLATION SPECIFICITY FACTOR SUBUNIT 4-RELATED"/>
    <property type="match status" value="1"/>
</dbReference>
<dbReference type="Pfam" id="PF00098">
    <property type="entry name" value="zf-CCHC"/>
    <property type="match status" value="1"/>
</dbReference>
<dbReference type="SMART" id="SM00343">
    <property type="entry name" value="ZnF_C2HC"/>
    <property type="match status" value="1"/>
</dbReference>
<dbReference type="SMART" id="SM00356">
    <property type="entry name" value="ZnF_C3H1"/>
    <property type="match status" value="4"/>
</dbReference>
<dbReference type="SUPFAM" id="SSF90229">
    <property type="entry name" value="CCCH zinc finger"/>
    <property type="match status" value="2"/>
</dbReference>
<dbReference type="SUPFAM" id="SSF57756">
    <property type="entry name" value="Retrovirus zinc finger-like domains"/>
    <property type="match status" value="1"/>
</dbReference>
<dbReference type="PROSITE" id="PS50103">
    <property type="entry name" value="ZF_C3H1"/>
    <property type="match status" value="5"/>
</dbReference>
<dbReference type="PROSITE" id="PS50158">
    <property type="entry name" value="ZF_CCHC"/>
    <property type="match status" value="1"/>
</dbReference>
<name>YTH1_CRYNB</name>
<keyword id="KW-0479">Metal-binding</keyword>
<keyword id="KW-0507">mRNA processing</keyword>
<keyword id="KW-0539">Nucleus</keyword>
<keyword id="KW-0677">Repeat</keyword>
<keyword id="KW-0694">RNA-binding</keyword>
<keyword id="KW-0862">Zinc</keyword>
<keyword id="KW-0863">Zinc-finger</keyword>
<evidence type="ECO:0000250" key="1"/>
<evidence type="ECO:0000255" key="2">
    <source>
        <dbReference type="PROSITE-ProRule" id="PRU00047"/>
    </source>
</evidence>
<evidence type="ECO:0000255" key="3">
    <source>
        <dbReference type="PROSITE-ProRule" id="PRU00723"/>
    </source>
</evidence>
<evidence type="ECO:0000256" key="4">
    <source>
        <dbReference type="SAM" id="MobiDB-lite"/>
    </source>
</evidence>
<evidence type="ECO:0000305" key="5"/>